<evidence type="ECO:0000255" key="1">
    <source>
        <dbReference type="HAMAP-Rule" id="MF_00137"/>
    </source>
</evidence>
<name>PUR7_KLEP7</name>
<comment type="catalytic activity">
    <reaction evidence="1">
        <text>5-amino-1-(5-phospho-D-ribosyl)imidazole-4-carboxylate + L-aspartate + ATP = (2S)-2-[5-amino-1-(5-phospho-beta-D-ribosyl)imidazole-4-carboxamido]succinate + ADP + phosphate + 2 H(+)</text>
        <dbReference type="Rhea" id="RHEA:22628"/>
        <dbReference type="ChEBI" id="CHEBI:15378"/>
        <dbReference type="ChEBI" id="CHEBI:29991"/>
        <dbReference type="ChEBI" id="CHEBI:30616"/>
        <dbReference type="ChEBI" id="CHEBI:43474"/>
        <dbReference type="ChEBI" id="CHEBI:58443"/>
        <dbReference type="ChEBI" id="CHEBI:77657"/>
        <dbReference type="ChEBI" id="CHEBI:456216"/>
        <dbReference type="EC" id="6.3.2.6"/>
    </reaction>
</comment>
<comment type="pathway">
    <text evidence="1">Purine metabolism; IMP biosynthesis via de novo pathway; 5-amino-1-(5-phospho-D-ribosyl)imidazole-4-carboxamide from 5-amino-1-(5-phospho-D-ribosyl)imidazole-4-carboxylate: step 1/2.</text>
</comment>
<comment type="similarity">
    <text evidence="1">Belongs to the SAICAR synthetase family.</text>
</comment>
<gene>
    <name evidence="1" type="primary">purC</name>
    <name type="ordered locus">KPN78578_27590</name>
    <name type="ORF">KPN_02810</name>
</gene>
<protein>
    <recommendedName>
        <fullName evidence="1">Phosphoribosylaminoimidazole-succinocarboxamide synthase</fullName>
        <ecNumber evidence="1">6.3.2.6</ecNumber>
    </recommendedName>
    <alternativeName>
        <fullName evidence="1">SAICAR synthetase</fullName>
    </alternativeName>
</protein>
<reference key="1">
    <citation type="submission" date="2006-09" db="EMBL/GenBank/DDBJ databases">
        <authorList>
            <consortium name="The Klebsiella pneumonia Genome Sequencing Project"/>
            <person name="McClelland M."/>
            <person name="Sanderson E.K."/>
            <person name="Spieth J."/>
            <person name="Clifton W.S."/>
            <person name="Latreille P."/>
            <person name="Sabo A."/>
            <person name="Pepin K."/>
            <person name="Bhonagiri V."/>
            <person name="Porwollik S."/>
            <person name="Ali J."/>
            <person name="Wilson R.K."/>
        </authorList>
    </citation>
    <scope>NUCLEOTIDE SEQUENCE [LARGE SCALE GENOMIC DNA]</scope>
    <source>
        <strain>ATCC 700721 / MGH 78578</strain>
    </source>
</reference>
<sequence length="237" mass="26878">MKKQAELYRGKAKTVYSTDNPDLLVLEFRNDTSAGDGARIEQFDRKGMVNNKFNHFIMSKLAEAGIPTQMEALLSDTECLVKKLDMVPVECVVRNRAAGSLVKRLGIEEGIELNPPLFDLFLKNDAMHDPMVNDSYCETFGWVSKENLARMRELTYKANDVLKKLFDDAGLILVDFKLEFGLFKGEVVLGDEFSPDGSRLWDKNTLDKMDKDRFRQSLGGLIEAYEEVAHRLGVKLD</sequence>
<keyword id="KW-0067">ATP-binding</keyword>
<keyword id="KW-0436">Ligase</keyword>
<keyword id="KW-0547">Nucleotide-binding</keyword>
<keyword id="KW-0658">Purine biosynthesis</keyword>
<dbReference type="EC" id="6.3.2.6" evidence="1"/>
<dbReference type="EMBL" id="CP000647">
    <property type="protein sequence ID" value="ABR78220.1"/>
    <property type="molecule type" value="Genomic_DNA"/>
</dbReference>
<dbReference type="RefSeq" id="WP_002913801.1">
    <property type="nucleotide sequence ID" value="NC_009648.1"/>
</dbReference>
<dbReference type="SMR" id="A6TC99"/>
<dbReference type="STRING" id="272620.KPN_02810"/>
<dbReference type="PaxDb" id="272620-KPN_02810"/>
<dbReference type="EnsemblBacteria" id="ABR78220">
    <property type="protein sequence ID" value="ABR78220"/>
    <property type="gene ID" value="KPN_02810"/>
</dbReference>
<dbReference type="GeneID" id="93271926"/>
<dbReference type="KEGG" id="kpn:KPN_02810"/>
<dbReference type="HOGENOM" id="CLU_061495_2_1_6"/>
<dbReference type="UniPathway" id="UPA00074">
    <property type="reaction ID" value="UER00131"/>
</dbReference>
<dbReference type="Proteomes" id="UP000000265">
    <property type="component" value="Chromosome"/>
</dbReference>
<dbReference type="GO" id="GO:0005829">
    <property type="term" value="C:cytosol"/>
    <property type="evidence" value="ECO:0007669"/>
    <property type="project" value="TreeGrafter"/>
</dbReference>
<dbReference type="GO" id="GO:0005524">
    <property type="term" value="F:ATP binding"/>
    <property type="evidence" value="ECO:0007669"/>
    <property type="project" value="UniProtKB-KW"/>
</dbReference>
<dbReference type="GO" id="GO:0004639">
    <property type="term" value="F:phosphoribosylaminoimidazolesuccinocarboxamide synthase activity"/>
    <property type="evidence" value="ECO:0007669"/>
    <property type="project" value="UniProtKB-UniRule"/>
</dbReference>
<dbReference type="GO" id="GO:0006189">
    <property type="term" value="P:'de novo' IMP biosynthetic process"/>
    <property type="evidence" value="ECO:0007669"/>
    <property type="project" value="UniProtKB-UniRule"/>
</dbReference>
<dbReference type="GO" id="GO:0009236">
    <property type="term" value="P:cobalamin biosynthetic process"/>
    <property type="evidence" value="ECO:0007669"/>
    <property type="project" value="InterPro"/>
</dbReference>
<dbReference type="CDD" id="cd01415">
    <property type="entry name" value="SAICAR_synt_PurC"/>
    <property type="match status" value="1"/>
</dbReference>
<dbReference type="FunFam" id="3.30.200.20:FF:000086">
    <property type="entry name" value="Phosphoribosylaminoimidazole-succinocarboxamide synthase"/>
    <property type="match status" value="1"/>
</dbReference>
<dbReference type="FunFam" id="3.30.470.20:FF:000006">
    <property type="entry name" value="Phosphoribosylaminoimidazole-succinocarboxamide synthase"/>
    <property type="match status" value="1"/>
</dbReference>
<dbReference type="Gene3D" id="3.30.470.20">
    <property type="entry name" value="ATP-grasp fold, B domain"/>
    <property type="match status" value="1"/>
</dbReference>
<dbReference type="Gene3D" id="3.30.200.20">
    <property type="entry name" value="Phosphorylase Kinase, domain 1"/>
    <property type="match status" value="1"/>
</dbReference>
<dbReference type="HAMAP" id="MF_00137">
    <property type="entry name" value="SAICAR_synth"/>
    <property type="match status" value="1"/>
</dbReference>
<dbReference type="InterPro" id="IPR028923">
    <property type="entry name" value="SAICAR_synt/ADE2_N"/>
</dbReference>
<dbReference type="InterPro" id="IPR033934">
    <property type="entry name" value="SAICAR_synt_PurC"/>
</dbReference>
<dbReference type="InterPro" id="IPR001636">
    <property type="entry name" value="SAICAR_synth"/>
</dbReference>
<dbReference type="InterPro" id="IPR050089">
    <property type="entry name" value="SAICAR_synthetase"/>
</dbReference>
<dbReference type="InterPro" id="IPR018236">
    <property type="entry name" value="SAICAR_synthetase_CS"/>
</dbReference>
<dbReference type="NCBIfam" id="TIGR00081">
    <property type="entry name" value="purC"/>
    <property type="match status" value="1"/>
</dbReference>
<dbReference type="PANTHER" id="PTHR43599">
    <property type="entry name" value="MULTIFUNCTIONAL PROTEIN ADE2"/>
    <property type="match status" value="1"/>
</dbReference>
<dbReference type="PANTHER" id="PTHR43599:SF3">
    <property type="entry name" value="SI:DKEY-6E2.2"/>
    <property type="match status" value="1"/>
</dbReference>
<dbReference type="Pfam" id="PF01259">
    <property type="entry name" value="SAICAR_synt"/>
    <property type="match status" value="1"/>
</dbReference>
<dbReference type="SUPFAM" id="SSF56104">
    <property type="entry name" value="SAICAR synthase-like"/>
    <property type="match status" value="1"/>
</dbReference>
<dbReference type="PROSITE" id="PS01057">
    <property type="entry name" value="SAICAR_SYNTHETASE_1"/>
    <property type="match status" value="1"/>
</dbReference>
<dbReference type="PROSITE" id="PS01058">
    <property type="entry name" value="SAICAR_SYNTHETASE_2"/>
    <property type="match status" value="1"/>
</dbReference>
<proteinExistence type="inferred from homology"/>
<accession>A6TC99</accession>
<feature type="chain" id="PRO_1000018717" description="Phosphoribosylaminoimidazole-succinocarboxamide synthase">
    <location>
        <begin position="1"/>
        <end position="237"/>
    </location>
</feature>
<organism>
    <name type="scientific">Klebsiella pneumoniae subsp. pneumoniae (strain ATCC 700721 / MGH 78578)</name>
    <dbReference type="NCBI Taxonomy" id="272620"/>
    <lineage>
        <taxon>Bacteria</taxon>
        <taxon>Pseudomonadati</taxon>
        <taxon>Pseudomonadota</taxon>
        <taxon>Gammaproteobacteria</taxon>
        <taxon>Enterobacterales</taxon>
        <taxon>Enterobacteriaceae</taxon>
        <taxon>Klebsiella/Raoultella group</taxon>
        <taxon>Klebsiella</taxon>
        <taxon>Klebsiella pneumoniae complex</taxon>
    </lineage>
</organism>